<reference key="1">
    <citation type="journal article" date="2004" name="Nat. Biotechnol.">
        <title>The genome sequence of the anaerobic, sulfate-reducing bacterium Desulfovibrio vulgaris Hildenborough.</title>
        <authorList>
            <person name="Heidelberg J.F."/>
            <person name="Seshadri R."/>
            <person name="Haveman S.A."/>
            <person name="Hemme C.L."/>
            <person name="Paulsen I.T."/>
            <person name="Kolonay J.F."/>
            <person name="Eisen J.A."/>
            <person name="Ward N.L."/>
            <person name="Methe B.A."/>
            <person name="Brinkac L.M."/>
            <person name="Daugherty S.C."/>
            <person name="DeBoy R.T."/>
            <person name="Dodson R.J."/>
            <person name="Durkin A.S."/>
            <person name="Madupu R."/>
            <person name="Nelson W.C."/>
            <person name="Sullivan S.A."/>
            <person name="Fouts D.E."/>
            <person name="Haft D.H."/>
            <person name="Selengut J."/>
            <person name="Peterson J.D."/>
            <person name="Davidsen T.M."/>
            <person name="Zafar N."/>
            <person name="Zhou L."/>
            <person name="Radune D."/>
            <person name="Dimitrov G."/>
            <person name="Hance M."/>
            <person name="Tran K."/>
            <person name="Khouri H.M."/>
            <person name="Gill J."/>
            <person name="Utterback T.R."/>
            <person name="Feldblyum T.V."/>
            <person name="Wall J.D."/>
            <person name="Voordouw G."/>
            <person name="Fraser C.M."/>
        </authorList>
    </citation>
    <scope>NUCLEOTIDE SEQUENCE [LARGE SCALE GENOMIC DNA]</scope>
    <source>
        <strain>ATCC 29579 / DSM 644 / CCUG 34227 / NCIMB 8303 / VKM B-1760 / Hildenborough</strain>
    </source>
</reference>
<dbReference type="EMBL" id="AE017285">
    <property type="protein sequence ID" value="AAS95313.1"/>
    <property type="molecule type" value="Genomic_DNA"/>
</dbReference>
<dbReference type="RefSeq" id="WP_010938134.1">
    <property type="nucleotide sequence ID" value="NC_002937.3"/>
</dbReference>
<dbReference type="RefSeq" id="YP_010054.1">
    <property type="nucleotide sequence ID" value="NC_002937.3"/>
</dbReference>
<dbReference type="SMR" id="Q72DU6"/>
<dbReference type="STRING" id="882.DVU_0833"/>
<dbReference type="PaxDb" id="882-DVU_0833"/>
<dbReference type="EnsemblBacteria" id="AAS95313">
    <property type="protein sequence ID" value="AAS95313"/>
    <property type="gene ID" value="DVU_0833"/>
</dbReference>
<dbReference type="KEGG" id="dvu:DVU_0833"/>
<dbReference type="PATRIC" id="fig|882.5.peg.779"/>
<dbReference type="eggNOG" id="COG0792">
    <property type="taxonomic scope" value="Bacteria"/>
</dbReference>
<dbReference type="HOGENOM" id="CLU_115353_2_1_7"/>
<dbReference type="OrthoDB" id="9794876at2"/>
<dbReference type="PhylomeDB" id="Q72DU6"/>
<dbReference type="Proteomes" id="UP000002194">
    <property type="component" value="Chromosome"/>
</dbReference>
<dbReference type="GO" id="GO:0003676">
    <property type="term" value="F:nucleic acid binding"/>
    <property type="evidence" value="ECO:0007669"/>
    <property type="project" value="InterPro"/>
</dbReference>
<dbReference type="CDD" id="cd20736">
    <property type="entry name" value="PoNe_Nuclease"/>
    <property type="match status" value="1"/>
</dbReference>
<dbReference type="Gene3D" id="3.40.1350.10">
    <property type="match status" value="1"/>
</dbReference>
<dbReference type="HAMAP" id="MF_00048">
    <property type="entry name" value="UPF0102"/>
    <property type="match status" value="1"/>
</dbReference>
<dbReference type="InterPro" id="IPR011335">
    <property type="entry name" value="Restrct_endonuc-II-like"/>
</dbReference>
<dbReference type="InterPro" id="IPR011856">
    <property type="entry name" value="tRNA_endonuc-like_dom_sf"/>
</dbReference>
<dbReference type="InterPro" id="IPR003509">
    <property type="entry name" value="UPF0102_YraN-like"/>
</dbReference>
<dbReference type="NCBIfam" id="NF009150">
    <property type="entry name" value="PRK12497.1-3"/>
    <property type="match status" value="1"/>
</dbReference>
<dbReference type="NCBIfam" id="NF009154">
    <property type="entry name" value="PRK12497.3-3"/>
    <property type="match status" value="1"/>
</dbReference>
<dbReference type="NCBIfam" id="NF011273">
    <property type="entry name" value="PRK14680.1"/>
    <property type="match status" value="1"/>
</dbReference>
<dbReference type="NCBIfam" id="TIGR00252">
    <property type="entry name" value="YraN family protein"/>
    <property type="match status" value="1"/>
</dbReference>
<dbReference type="PANTHER" id="PTHR34039">
    <property type="entry name" value="UPF0102 PROTEIN YRAN"/>
    <property type="match status" value="1"/>
</dbReference>
<dbReference type="PANTHER" id="PTHR34039:SF1">
    <property type="entry name" value="UPF0102 PROTEIN YRAN"/>
    <property type="match status" value="1"/>
</dbReference>
<dbReference type="Pfam" id="PF02021">
    <property type="entry name" value="UPF0102"/>
    <property type="match status" value="1"/>
</dbReference>
<dbReference type="SUPFAM" id="SSF52980">
    <property type="entry name" value="Restriction endonuclease-like"/>
    <property type="match status" value="1"/>
</dbReference>
<sequence length="134" mass="14851">MVDARHATGQHGEDEAAALLQRTGHRIIARNWRHGGLELDIICETGDTIVFVEVKTRAAHGLTSPTDALTHQKRHRLIRAARAWLAAADAWDRACRFDLVCVTQRGATCTLEHITDAFDLTETLGGGDTSWQPW</sequence>
<gene>
    <name type="ordered locus">DVU_0833</name>
</gene>
<keyword id="KW-1185">Reference proteome</keyword>
<comment type="similarity">
    <text evidence="1">Belongs to the UPF0102 family.</text>
</comment>
<evidence type="ECO:0000255" key="1">
    <source>
        <dbReference type="HAMAP-Rule" id="MF_00048"/>
    </source>
</evidence>
<feature type="chain" id="PRO_1000009213" description="UPF0102 protein DVU_0833">
    <location>
        <begin position="1"/>
        <end position="134"/>
    </location>
</feature>
<name>Y833_NITV2</name>
<accession>Q72DU6</accession>
<organism>
    <name type="scientific">Nitratidesulfovibrio vulgaris (strain ATCC 29579 / DSM 644 / CCUG 34227 / NCIMB 8303 / VKM B-1760 / Hildenborough)</name>
    <name type="common">Desulfovibrio vulgaris</name>
    <dbReference type="NCBI Taxonomy" id="882"/>
    <lineage>
        <taxon>Bacteria</taxon>
        <taxon>Pseudomonadati</taxon>
        <taxon>Thermodesulfobacteriota</taxon>
        <taxon>Desulfovibrionia</taxon>
        <taxon>Desulfovibrionales</taxon>
        <taxon>Desulfovibrionaceae</taxon>
        <taxon>Nitratidesulfovibrio</taxon>
    </lineage>
</organism>
<proteinExistence type="inferred from homology"/>
<protein>
    <recommendedName>
        <fullName evidence="1">UPF0102 protein DVU_0833</fullName>
    </recommendedName>
</protein>